<name>DFFB_BOVIN</name>
<sequence>MSAVLRKPKTFKLRSLHSEKKFGVAGRSCEEVLRKGCQRLQLPIPGSRLCLYEDGTELTGDYFWSAPDNSELVLLTAGQTWQGFVSDISRFLSVFQEPHAGVIQAARQLLWDERAPLRQKLLADLLGTVSENIAAETRAEDPPWFEGLESRFRSKSGYLRYSCESRIRSYLREVTSGASLVGAEAREEYLRLVGSMQQKLQAAQYNSSYFDRGAKAGRRLCTPEGWFSCQGPFDVDDCTSRHSINPYSNRESRVLFSTWNLDHVIEKKRVVVPALAAAVHDAEGREVDWEYFYRLLFTLENLKLVHIACHKKTTHKLHCDPSRVYCTPAAPRRKRHARHRL</sequence>
<keyword id="KW-0053">Apoptosis</keyword>
<keyword id="KW-0963">Cytoplasm</keyword>
<keyword id="KW-0378">Hydrolase</keyword>
<keyword id="KW-0540">Nuclease</keyword>
<keyword id="KW-0539">Nucleus</keyword>
<keyword id="KW-1185">Reference proteome</keyword>
<reference key="1">
    <citation type="journal article" date="2005" name="BMC Genomics">
        <title>Characterization of 954 bovine full-CDS cDNA sequences.</title>
        <authorList>
            <person name="Harhay G.P."/>
            <person name="Sonstegard T.S."/>
            <person name="Keele J.W."/>
            <person name="Heaton M.P."/>
            <person name="Clawson M.L."/>
            <person name="Snelling W.M."/>
            <person name="Wiedmann R.T."/>
            <person name="Van Tassell C.P."/>
            <person name="Smith T.P.L."/>
        </authorList>
    </citation>
    <scope>NUCLEOTIDE SEQUENCE [LARGE SCALE MRNA]</scope>
</reference>
<accession>Q58CZ0</accession>
<gene>
    <name type="primary">DFFB</name>
</gene>
<evidence type="ECO:0000250" key="1"/>
<evidence type="ECO:0000250" key="2">
    <source>
        <dbReference type="UniProtKB" id="O76075"/>
    </source>
</evidence>
<evidence type="ECO:0000255" key="3">
    <source>
        <dbReference type="PROSITE-ProRule" id="PRU00447"/>
    </source>
</evidence>
<protein>
    <recommendedName>
        <fullName>DNA fragmentation factor subunit beta</fullName>
        <ecNumber>3.-.-.-</ecNumber>
    </recommendedName>
</protein>
<feature type="chain" id="PRO_0000244030" description="DNA fragmentation factor subunit beta">
    <location>
        <begin position="1"/>
        <end position="341"/>
    </location>
</feature>
<feature type="domain" description="CIDE-N" evidence="3">
    <location>
        <begin position="7"/>
        <end position="83"/>
    </location>
</feature>
<comment type="function">
    <text evidence="1">Nuclease that induces DNA fragmentation and chromatin condensation during apoptosis. Degrades naked DNA and induces apoptotic morphology (By similarity).</text>
</comment>
<comment type="activity regulation">
    <text evidence="1">Inhibited by DFFA (DFF45). Interacts with HIST1H1A.</text>
</comment>
<comment type="subunit">
    <text evidence="2">Heterodimer of DFFA and DFFB (By similarity). Interacts with H1-1 (By similarity).</text>
</comment>
<comment type="subcellular location">
    <subcellularLocation>
        <location evidence="1">Cytoplasm</location>
    </subcellularLocation>
    <subcellularLocation>
        <location evidence="1">Nucleus</location>
    </subcellularLocation>
</comment>
<dbReference type="EC" id="3.-.-.-"/>
<dbReference type="EMBL" id="BT021807">
    <property type="protein sequence ID" value="AAX46654.1"/>
    <property type="molecule type" value="mRNA"/>
</dbReference>
<dbReference type="RefSeq" id="NP_001030281.1">
    <property type="nucleotide sequence ID" value="NM_001035109.1"/>
</dbReference>
<dbReference type="SMR" id="Q58CZ0"/>
<dbReference type="FunCoup" id="Q58CZ0">
    <property type="interactions" value="994"/>
</dbReference>
<dbReference type="STRING" id="9913.ENSBTAP00000026657"/>
<dbReference type="PaxDb" id="9913-ENSBTAP00000026657"/>
<dbReference type="GeneID" id="512730"/>
<dbReference type="KEGG" id="bta:512730"/>
<dbReference type="CTD" id="1677"/>
<dbReference type="eggNOG" id="ENOG502R0RF">
    <property type="taxonomic scope" value="Eukaryota"/>
</dbReference>
<dbReference type="InParanoid" id="Q58CZ0"/>
<dbReference type="OrthoDB" id="9943677at2759"/>
<dbReference type="Proteomes" id="UP000009136">
    <property type="component" value="Unplaced"/>
</dbReference>
<dbReference type="GO" id="GO:0005737">
    <property type="term" value="C:cytoplasm"/>
    <property type="evidence" value="ECO:0007669"/>
    <property type="project" value="UniProtKB-SubCell"/>
</dbReference>
<dbReference type="GO" id="GO:0005634">
    <property type="term" value="C:nucleus"/>
    <property type="evidence" value="ECO:0007669"/>
    <property type="project" value="UniProtKB-SubCell"/>
</dbReference>
<dbReference type="GO" id="GO:0004520">
    <property type="term" value="F:DNA endonuclease activity"/>
    <property type="evidence" value="ECO:0007669"/>
    <property type="project" value="InterPro"/>
</dbReference>
<dbReference type="GO" id="GO:0004536">
    <property type="term" value="F:DNA nuclease activity"/>
    <property type="evidence" value="ECO:0000318"/>
    <property type="project" value="GO_Central"/>
</dbReference>
<dbReference type="GO" id="GO:0006309">
    <property type="term" value="P:apoptotic DNA fragmentation"/>
    <property type="evidence" value="ECO:0000318"/>
    <property type="project" value="GO_Central"/>
</dbReference>
<dbReference type="FunFam" id="3.10.20.10:FF:000006">
    <property type="entry name" value="DNA fragmentation factor subunit beta"/>
    <property type="match status" value="1"/>
</dbReference>
<dbReference type="Gene3D" id="3.10.20.10">
    <property type="match status" value="1"/>
</dbReference>
<dbReference type="Gene3D" id="6.10.140.170">
    <property type="match status" value="1"/>
</dbReference>
<dbReference type="InterPro" id="IPR003508">
    <property type="entry name" value="CIDE-N_dom"/>
</dbReference>
<dbReference type="InterPro" id="IPR039729">
    <property type="entry name" value="DFF40"/>
</dbReference>
<dbReference type="InterPro" id="IPR015311">
    <property type="entry name" value="DFF40_C"/>
</dbReference>
<dbReference type="InterPro" id="IPR044925">
    <property type="entry name" value="His-Me_finger_sf"/>
</dbReference>
<dbReference type="PANTHER" id="PTHR13067">
    <property type="entry name" value="CASPASE-ACTIVATED DNASE"/>
    <property type="match status" value="1"/>
</dbReference>
<dbReference type="PANTHER" id="PTHR13067:SF2">
    <property type="entry name" value="CASPASE-ACTIVATED DNASE"/>
    <property type="match status" value="1"/>
</dbReference>
<dbReference type="Pfam" id="PF02017">
    <property type="entry name" value="CIDE-N"/>
    <property type="match status" value="1"/>
</dbReference>
<dbReference type="Pfam" id="PF09230">
    <property type="entry name" value="DFF40"/>
    <property type="match status" value="1"/>
</dbReference>
<dbReference type="SMART" id="SM00266">
    <property type="entry name" value="CAD"/>
    <property type="match status" value="1"/>
</dbReference>
<dbReference type="SUPFAM" id="SSF54277">
    <property type="entry name" value="CAD &amp; PB1 domains"/>
    <property type="match status" value="1"/>
</dbReference>
<dbReference type="SUPFAM" id="SSF54060">
    <property type="entry name" value="His-Me finger endonucleases"/>
    <property type="match status" value="1"/>
</dbReference>
<dbReference type="PROSITE" id="PS51135">
    <property type="entry name" value="CIDE_N"/>
    <property type="match status" value="1"/>
</dbReference>
<organism>
    <name type="scientific">Bos taurus</name>
    <name type="common">Bovine</name>
    <dbReference type="NCBI Taxonomy" id="9913"/>
    <lineage>
        <taxon>Eukaryota</taxon>
        <taxon>Metazoa</taxon>
        <taxon>Chordata</taxon>
        <taxon>Craniata</taxon>
        <taxon>Vertebrata</taxon>
        <taxon>Euteleostomi</taxon>
        <taxon>Mammalia</taxon>
        <taxon>Eutheria</taxon>
        <taxon>Laurasiatheria</taxon>
        <taxon>Artiodactyla</taxon>
        <taxon>Ruminantia</taxon>
        <taxon>Pecora</taxon>
        <taxon>Bovidae</taxon>
        <taxon>Bovinae</taxon>
        <taxon>Bos</taxon>
    </lineage>
</organism>
<proteinExistence type="evidence at transcript level"/>